<reference key="1">
    <citation type="journal article" date="1987" name="Biol. Chem. Hoppe-Seyler">
        <title>The complete amino-acid sequence of dimeric beta-lactoglobulin from mouflon (Ovis ammon musimon) milk.</title>
        <authorList>
            <person name="Godovac-Zimmermann J."/>
            <person name="Conti A."/>
            <person name="Napolitano L."/>
        </authorList>
    </citation>
    <scope>PROTEIN SEQUENCE</scope>
</reference>
<evidence type="ECO:0000305" key="1"/>
<gene>
    <name type="primary">LGB</name>
</gene>
<keyword id="KW-0903">Direct protein sequencing</keyword>
<keyword id="KW-1015">Disulfide bond</keyword>
<keyword id="KW-0494">Milk protein</keyword>
<keyword id="KW-0683">Retinol-binding</keyword>
<keyword id="KW-0964">Secreted</keyword>
<keyword id="KW-0813">Transport</keyword>
<accession>P67975</accession>
<accession>P02757</accession>
<comment type="function">
    <text>Lactoglobulin is the primary component of whey, it binds retinol and is probably involved in the transport of that molecule.</text>
</comment>
<comment type="subunit">
    <text>Under physiological conditions beta-lactoglobulin exists as an equilibrium mixture of monomeric and dimeric forms.</text>
</comment>
<comment type="subcellular location">
    <subcellularLocation>
        <location>Secreted</location>
    </subcellularLocation>
</comment>
<comment type="PTM">
    <text>Alternate disulfide bonds occur in equal amounts.</text>
</comment>
<comment type="similarity">
    <text evidence="1">Belongs to the calycin superfamily. Lipocalin family.</text>
</comment>
<organism>
    <name type="scientific">Ovis aries musimon</name>
    <name type="common">Mouflon</name>
    <dbReference type="NCBI Taxonomy" id="9938"/>
    <lineage>
        <taxon>Eukaryota</taxon>
        <taxon>Metazoa</taxon>
        <taxon>Chordata</taxon>
        <taxon>Craniata</taxon>
        <taxon>Vertebrata</taxon>
        <taxon>Euteleostomi</taxon>
        <taxon>Mammalia</taxon>
        <taxon>Eutheria</taxon>
        <taxon>Laurasiatheria</taxon>
        <taxon>Artiodactyla</taxon>
        <taxon>Ruminantia</taxon>
        <taxon>Pecora</taxon>
        <taxon>Bovidae</taxon>
        <taxon>Caprinae</taxon>
        <taxon>Ovis</taxon>
    </lineage>
</organism>
<sequence length="162" mass="18151">IIVTQTMKGLDIQKVAGTWHSLAMAASDISLLDAQSAPLRVYVEELKPTPEGNLEILLQKWENGECAQKKIIAEKTKIPAVFKIDALNENKVLVLDTDYKKYLLFCMENSAEPEQSLACQCLVRTPEVDNEALEKFDKALKALPMHIRLAFNPTQLEGQCHV</sequence>
<name>LACB_OVIMU</name>
<proteinExistence type="evidence at protein level"/>
<feature type="chain" id="PRO_0000201021" description="Beta-lactoglobulin">
    <location>
        <begin position="1"/>
        <end position="162"/>
    </location>
</feature>
<feature type="disulfide bond">
    <location>
        <begin position="66"/>
        <end position="160"/>
    </location>
</feature>
<feature type="disulfide bond" description="Alternate">
    <location>
        <begin position="106"/>
        <end position="121"/>
    </location>
</feature>
<feature type="disulfide bond">
    <location>
        <begin position="106"/>
        <end position="119"/>
    </location>
</feature>
<protein>
    <recommendedName>
        <fullName>Beta-lactoglobulin</fullName>
        <shortName>Beta-LG</shortName>
    </recommendedName>
</protein>
<dbReference type="SMR" id="P67975"/>
<dbReference type="GO" id="GO:0005576">
    <property type="term" value="C:extracellular region"/>
    <property type="evidence" value="ECO:0007669"/>
    <property type="project" value="UniProtKB-SubCell"/>
</dbReference>
<dbReference type="GO" id="GO:0019841">
    <property type="term" value="F:retinol binding"/>
    <property type="evidence" value="ECO:0007669"/>
    <property type="project" value="UniProtKB-KW"/>
</dbReference>
<dbReference type="CDD" id="cd19416">
    <property type="entry name" value="lipocalin_beta-LG-like"/>
    <property type="match status" value="1"/>
</dbReference>
<dbReference type="FunFam" id="2.40.128.20:FF:000029">
    <property type="entry name" value="Beta-lactoglobulin"/>
    <property type="match status" value="1"/>
</dbReference>
<dbReference type="Gene3D" id="2.40.128.20">
    <property type="match status" value="1"/>
</dbReference>
<dbReference type="InterPro" id="IPR002447">
    <property type="entry name" value="Blactoglobulin"/>
</dbReference>
<dbReference type="InterPro" id="IPR012674">
    <property type="entry name" value="Calycin"/>
</dbReference>
<dbReference type="InterPro" id="IPR002345">
    <property type="entry name" value="Lipocalin"/>
</dbReference>
<dbReference type="InterPro" id="IPR022272">
    <property type="entry name" value="Lipocalin_CS"/>
</dbReference>
<dbReference type="InterPro" id="IPR000566">
    <property type="entry name" value="Lipocln_cytosolic_FA-bd_dom"/>
</dbReference>
<dbReference type="PANTHER" id="PTHR11430:SF117">
    <property type="entry name" value="GLYCODELIN"/>
    <property type="match status" value="1"/>
</dbReference>
<dbReference type="PANTHER" id="PTHR11430">
    <property type="entry name" value="LIPOCALIN"/>
    <property type="match status" value="1"/>
</dbReference>
<dbReference type="Pfam" id="PF00061">
    <property type="entry name" value="Lipocalin"/>
    <property type="match status" value="1"/>
</dbReference>
<dbReference type="PRINTS" id="PR01172">
    <property type="entry name" value="BLCTOGLOBULN"/>
</dbReference>
<dbReference type="PRINTS" id="PR00179">
    <property type="entry name" value="LIPOCALIN"/>
</dbReference>
<dbReference type="SUPFAM" id="SSF50814">
    <property type="entry name" value="Lipocalins"/>
    <property type="match status" value="1"/>
</dbReference>
<dbReference type="PROSITE" id="PS00213">
    <property type="entry name" value="LIPOCALIN"/>
    <property type="match status" value="1"/>
</dbReference>